<feature type="chain" id="PRO_1000093449" description="Peptide chain release factor 1">
    <location>
        <begin position="1"/>
        <end position="355"/>
    </location>
</feature>
<feature type="modified residue" description="N5-methylglutamine" evidence="1">
    <location>
        <position position="233"/>
    </location>
</feature>
<comment type="function">
    <text evidence="1">Peptide chain release factor 1 directs the termination of translation in response to the peptide chain termination codons UAG and UAA.</text>
</comment>
<comment type="subcellular location">
    <subcellularLocation>
        <location evidence="1">Cytoplasm</location>
    </subcellularLocation>
</comment>
<comment type="PTM">
    <text evidence="1">Methylated by PrmC. Methylation increases the termination efficiency of RF1.</text>
</comment>
<comment type="similarity">
    <text evidence="1">Belongs to the prokaryotic/mitochondrial release factor family.</text>
</comment>
<name>RF1_DESAP</name>
<reference key="1">
    <citation type="submission" date="2007-10" db="EMBL/GenBank/DDBJ databases">
        <title>Complete sequence of chromosome of Desulforudis audaxviator MP104C.</title>
        <authorList>
            <person name="Copeland A."/>
            <person name="Lucas S."/>
            <person name="Lapidus A."/>
            <person name="Barry K."/>
            <person name="Glavina del Rio T."/>
            <person name="Dalin E."/>
            <person name="Tice H."/>
            <person name="Bruce D."/>
            <person name="Pitluck S."/>
            <person name="Lowry S.R."/>
            <person name="Larimer F."/>
            <person name="Land M.L."/>
            <person name="Hauser L."/>
            <person name="Kyrpides N."/>
            <person name="Ivanova N.N."/>
            <person name="Richardson P."/>
        </authorList>
    </citation>
    <scope>NUCLEOTIDE SEQUENCE [LARGE SCALE GENOMIC DNA]</scope>
    <source>
        <strain>MP104C</strain>
    </source>
</reference>
<proteinExistence type="inferred from homology"/>
<sequence>MFAKLDHLEAKYEELNRLISDPVVIQDQERWRGYVKSHAEIGEVVAVYREYKRVAAEMDDARQMLREEQDAELRELAESEVEVLRERSDELRRRLRVLLLPKDPNDEKNVIIEIRAGTGGEEAALFAGDLLRMYLRYAERRGWRAEMLNVNETDLGGIKEAIVLLEGRGAYSELKFESGVHRVQRVPATESGGRIHTSAATVAVLPEAEEVDVEIRPEDLRIDVFCSTGPGGQSVNTTQSAVRVTHLPSGIVVSCQDEKSQHKNRDKAMKVLRARLLDKAQQEQQERIASSRKTQVGTGDRSERIRTYNFPQNRVTDHRLNLTLYRLEEVLQGDLHEFVSALITSDQAEKLKTLD</sequence>
<accession>B1I6L2</accession>
<keyword id="KW-0963">Cytoplasm</keyword>
<keyword id="KW-0488">Methylation</keyword>
<keyword id="KW-0648">Protein biosynthesis</keyword>
<keyword id="KW-1185">Reference proteome</keyword>
<gene>
    <name evidence="1" type="primary">prfA</name>
    <name type="ordered locus">Daud_2154</name>
</gene>
<dbReference type="EMBL" id="CP000860">
    <property type="protein sequence ID" value="ACA60641.1"/>
    <property type="molecule type" value="Genomic_DNA"/>
</dbReference>
<dbReference type="RefSeq" id="WP_012303216.1">
    <property type="nucleotide sequence ID" value="NC_010424.1"/>
</dbReference>
<dbReference type="SMR" id="B1I6L2"/>
<dbReference type="STRING" id="477974.Daud_2154"/>
<dbReference type="KEGG" id="dau:Daud_2154"/>
<dbReference type="eggNOG" id="COG0216">
    <property type="taxonomic scope" value="Bacteria"/>
</dbReference>
<dbReference type="HOGENOM" id="CLU_036856_0_1_9"/>
<dbReference type="OrthoDB" id="9806673at2"/>
<dbReference type="Proteomes" id="UP000008544">
    <property type="component" value="Chromosome"/>
</dbReference>
<dbReference type="GO" id="GO:0005737">
    <property type="term" value="C:cytoplasm"/>
    <property type="evidence" value="ECO:0007669"/>
    <property type="project" value="UniProtKB-SubCell"/>
</dbReference>
<dbReference type="GO" id="GO:0016149">
    <property type="term" value="F:translation release factor activity, codon specific"/>
    <property type="evidence" value="ECO:0007669"/>
    <property type="project" value="UniProtKB-UniRule"/>
</dbReference>
<dbReference type="FunFam" id="3.30.160.20:FF:000004">
    <property type="entry name" value="Peptide chain release factor 1"/>
    <property type="match status" value="1"/>
</dbReference>
<dbReference type="FunFam" id="3.30.70.1660:FF:000002">
    <property type="entry name" value="Peptide chain release factor 1"/>
    <property type="match status" value="1"/>
</dbReference>
<dbReference type="FunFam" id="3.30.70.1660:FF:000004">
    <property type="entry name" value="Peptide chain release factor 1"/>
    <property type="match status" value="1"/>
</dbReference>
<dbReference type="Gene3D" id="3.30.160.20">
    <property type="match status" value="1"/>
</dbReference>
<dbReference type="Gene3D" id="3.30.70.1660">
    <property type="match status" value="1"/>
</dbReference>
<dbReference type="Gene3D" id="6.10.140.1950">
    <property type="match status" value="1"/>
</dbReference>
<dbReference type="HAMAP" id="MF_00093">
    <property type="entry name" value="Rel_fac_1"/>
    <property type="match status" value="1"/>
</dbReference>
<dbReference type="InterPro" id="IPR005139">
    <property type="entry name" value="PCRF"/>
</dbReference>
<dbReference type="InterPro" id="IPR000352">
    <property type="entry name" value="Pep_chain_release_fac_I"/>
</dbReference>
<dbReference type="InterPro" id="IPR045853">
    <property type="entry name" value="Pep_chain_release_fac_I_sf"/>
</dbReference>
<dbReference type="InterPro" id="IPR050057">
    <property type="entry name" value="Prokaryotic/Mito_RF"/>
</dbReference>
<dbReference type="InterPro" id="IPR004373">
    <property type="entry name" value="RF-1"/>
</dbReference>
<dbReference type="NCBIfam" id="TIGR00019">
    <property type="entry name" value="prfA"/>
    <property type="match status" value="1"/>
</dbReference>
<dbReference type="NCBIfam" id="NF001859">
    <property type="entry name" value="PRK00591.1"/>
    <property type="match status" value="1"/>
</dbReference>
<dbReference type="PANTHER" id="PTHR43804">
    <property type="entry name" value="LD18447P"/>
    <property type="match status" value="1"/>
</dbReference>
<dbReference type="PANTHER" id="PTHR43804:SF7">
    <property type="entry name" value="LD18447P"/>
    <property type="match status" value="1"/>
</dbReference>
<dbReference type="Pfam" id="PF03462">
    <property type="entry name" value="PCRF"/>
    <property type="match status" value="1"/>
</dbReference>
<dbReference type="Pfam" id="PF00472">
    <property type="entry name" value="RF-1"/>
    <property type="match status" value="1"/>
</dbReference>
<dbReference type="SMART" id="SM00937">
    <property type="entry name" value="PCRF"/>
    <property type="match status" value="1"/>
</dbReference>
<dbReference type="SUPFAM" id="SSF75620">
    <property type="entry name" value="Release factor"/>
    <property type="match status" value="1"/>
</dbReference>
<evidence type="ECO:0000255" key="1">
    <source>
        <dbReference type="HAMAP-Rule" id="MF_00093"/>
    </source>
</evidence>
<organism>
    <name type="scientific">Desulforudis audaxviator (strain MP104C)</name>
    <dbReference type="NCBI Taxonomy" id="477974"/>
    <lineage>
        <taxon>Bacteria</taxon>
        <taxon>Bacillati</taxon>
        <taxon>Bacillota</taxon>
        <taxon>Clostridia</taxon>
        <taxon>Thermoanaerobacterales</taxon>
        <taxon>Candidatus Desulforudaceae</taxon>
        <taxon>Candidatus Desulforudis</taxon>
    </lineage>
</organism>
<protein>
    <recommendedName>
        <fullName evidence="1">Peptide chain release factor 1</fullName>
        <shortName evidence="1">RF-1</shortName>
    </recommendedName>
</protein>